<reference key="1">
    <citation type="journal article" date="2008" name="Antimicrob. Agents Chemother.">
        <title>Whole-genome pyrosequencing of an epidemic multidrug-resistant Acinetobacter baumannii strain belonging to the European clone II group.</title>
        <authorList>
            <person name="Iacono M."/>
            <person name="Villa L."/>
            <person name="Fortini D."/>
            <person name="Bordoni R."/>
            <person name="Imperi F."/>
            <person name="Bonnal R.J."/>
            <person name="Sicheritz-Ponten T."/>
            <person name="De Bellis G."/>
            <person name="Visca P."/>
            <person name="Cassone A."/>
            <person name="Carattoli A."/>
        </authorList>
    </citation>
    <scope>NUCLEOTIDE SEQUENCE [LARGE SCALE GENOMIC DNA]</scope>
    <source>
        <strain>ACICU</strain>
    </source>
</reference>
<accession>B2HYJ0</accession>
<keyword id="KW-0028">Amino-acid biosynthesis</keyword>
<keyword id="KW-0057">Aromatic amino acid biosynthesis</keyword>
<keyword id="KW-0456">Lyase</keyword>
<keyword id="KW-0822">Tryptophan biosynthesis</keyword>
<proteinExistence type="inferred from homology"/>
<sequence>MSRLATRFEKLQSQQRKALVSYVMAGDPQPQVTVPLLHKMVAAGVDVIELGLPFSDPMADGPVIALAAERALAAGTNTLDALNMVKEFREQDQETPVVLMGYLNPVEVIGYEKFVSYAKQCGVDGLLLVDLPPEESKEFGAILKQHDMDQIFLLAPTSTDQRIQHVANQASGFIYYVSLKGVTGAATLDTSEAAARIEKIKGMTNVPVGVGFGISDAASAKAMGSVADAVIVGSAFVKSFATLAADEAVEQTVNKVKELRAALDELV</sequence>
<organism>
    <name type="scientific">Acinetobacter baumannii (strain ACICU)</name>
    <dbReference type="NCBI Taxonomy" id="405416"/>
    <lineage>
        <taxon>Bacteria</taxon>
        <taxon>Pseudomonadati</taxon>
        <taxon>Pseudomonadota</taxon>
        <taxon>Gammaproteobacteria</taxon>
        <taxon>Moraxellales</taxon>
        <taxon>Moraxellaceae</taxon>
        <taxon>Acinetobacter</taxon>
        <taxon>Acinetobacter calcoaceticus/baumannii complex</taxon>
    </lineage>
</organism>
<gene>
    <name evidence="1" type="primary">trpA</name>
    <name type="ordered locus">ACICU_03117</name>
</gene>
<dbReference type="EC" id="4.2.1.20" evidence="1"/>
<dbReference type="EMBL" id="CP000863">
    <property type="protein sequence ID" value="ACC58429.1"/>
    <property type="molecule type" value="Genomic_DNA"/>
</dbReference>
<dbReference type="RefSeq" id="WP_000088559.1">
    <property type="nucleotide sequence ID" value="NZ_CP031380.1"/>
</dbReference>
<dbReference type="SMR" id="B2HYJ0"/>
<dbReference type="GeneID" id="92895147"/>
<dbReference type="KEGG" id="abc:ACICU_03117"/>
<dbReference type="HOGENOM" id="CLU_016734_0_0_6"/>
<dbReference type="UniPathway" id="UPA00035">
    <property type="reaction ID" value="UER00044"/>
</dbReference>
<dbReference type="Proteomes" id="UP000008839">
    <property type="component" value="Chromosome"/>
</dbReference>
<dbReference type="GO" id="GO:0005829">
    <property type="term" value="C:cytosol"/>
    <property type="evidence" value="ECO:0007669"/>
    <property type="project" value="TreeGrafter"/>
</dbReference>
<dbReference type="GO" id="GO:0004834">
    <property type="term" value="F:tryptophan synthase activity"/>
    <property type="evidence" value="ECO:0007669"/>
    <property type="project" value="UniProtKB-UniRule"/>
</dbReference>
<dbReference type="CDD" id="cd04724">
    <property type="entry name" value="Tryptophan_synthase_alpha"/>
    <property type="match status" value="1"/>
</dbReference>
<dbReference type="FunFam" id="3.20.20.70:FF:000037">
    <property type="entry name" value="Tryptophan synthase alpha chain"/>
    <property type="match status" value="1"/>
</dbReference>
<dbReference type="Gene3D" id="3.20.20.70">
    <property type="entry name" value="Aldolase class I"/>
    <property type="match status" value="1"/>
</dbReference>
<dbReference type="HAMAP" id="MF_00131">
    <property type="entry name" value="Trp_synth_alpha"/>
    <property type="match status" value="1"/>
</dbReference>
<dbReference type="InterPro" id="IPR013785">
    <property type="entry name" value="Aldolase_TIM"/>
</dbReference>
<dbReference type="InterPro" id="IPR011060">
    <property type="entry name" value="RibuloseP-bd_barrel"/>
</dbReference>
<dbReference type="InterPro" id="IPR018204">
    <property type="entry name" value="Trp_synthase_alpha_AS"/>
</dbReference>
<dbReference type="InterPro" id="IPR002028">
    <property type="entry name" value="Trp_synthase_suA"/>
</dbReference>
<dbReference type="NCBIfam" id="TIGR00262">
    <property type="entry name" value="trpA"/>
    <property type="match status" value="1"/>
</dbReference>
<dbReference type="PANTHER" id="PTHR43406:SF1">
    <property type="entry name" value="TRYPTOPHAN SYNTHASE ALPHA CHAIN, CHLOROPLASTIC"/>
    <property type="match status" value="1"/>
</dbReference>
<dbReference type="PANTHER" id="PTHR43406">
    <property type="entry name" value="TRYPTOPHAN SYNTHASE, ALPHA CHAIN"/>
    <property type="match status" value="1"/>
</dbReference>
<dbReference type="Pfam" id="PF00290">
    <property type="entry name" value="Trp_syntA"/>
    <property type="match status" value="1"/>
</dbReference>
<dbReference type="SUPFAM" id="SSF51366">
    <property type="entry name" value="Ribulose-phoshate binding barrel"/>
    <property type="match status" value="1"/>
</dbReference>
<dbReference type="PROSITE" id="PS00167">
    <property type="entry name" value="TRP_SYNTHASE_ALPHA"/>
    <property type="match status" value="1"/>
</dbReference>
<feature type="chain" id="PRO_1000095684" description="Tryptophan synthase alpha chain">
    <location>
        <begin position="1"/>
        <end position="267"/>
    </location>
</feature>
<feature type="active site" description="Proton acceptor" evidence="1">
    <location>
        <position position="49"/>
    </location>
</feature>
<feature type="active site" description="Proton acceptor" evidence="1">
    <location>
        <position position="60"/>
    </location>
</feature>
<evidence type="ECO:0000255" key="1">
    <source>
        <dbReference type="HAMAP-Rule" id="MF_00131"/>
    </source>
</evidence>
<name>TRPA_ACIBC</name>
<comment type="function">
    <text evidence="1">The alpha subunit is responsible for the aldol cleavage of indoleglycerol phosphate to indole and glyceraldehyde 3-phosphate.</text>
</comment>
<comment type="catalytic activity">
    <reaction evidence="1">
        <text>(1S,2R)-1-C-(indol-3-yl)glycerol 3-phosphate + L-serine = D-glyceraldehyde 3-phosphate + L-tryptophan + H2O</text>
        <dbReference type="Rhea" id="RHEA:10532"/>
        <dbReference type="ChEBI" id="CHEBI:15377"/>
        <dbReference type="ChEBI" id="CHEBI:33384"/>
        <dbReference type="ChEBI" id="CHEBI:57912"/>
        <dbReference type="ChEBI" id="CHEBI:58866"/>
        <dbReference type="ChEBI" id="CHEBI:59776"/>
        <dbReference type="EC" id="4.2.1.20"/>
    </reaction>
</comment>
<comment type="pathway">
    <text evidence="1">Amino-acid biosynthesis; L-tryptophan biosynthesis; L-tryptophan from chorismate: step 5/5.</text>
</comment>
<comment type="subunit">
    <text evidence="1">Tetramer of two alpha and two beta chains.</text>
</comment>
<comment type="similarity">
    <text evidence="1">Belongs to the TrpA family.</text>
</comment>
<protein>
    <recommendedName>
        <fullName evidence="1">Tryptophan synthase alpha chain</fullName>
        <ecNumber evidence="1">4.2.1.20</ecNumber>
    </recommendedName>
</protein>